<gene>
    <name evidence="1" type="primary">msrP</name>
    <name type="ordered locus">Cj0379c</name>
</gene>
<proteinExistence type="inferred from homology"/>
<evidence type="ECO:0000255" key="1">
    <source>
        <dbReference type="HAMAP-Rule" id="MF_01206"/>
    </source>
</evidence>
<accession>Q9PIC3</accession>
<accession>Q0PBD1</accession>
<comment type="function">
    <text evidence="1">Part of the MsrPQ system that repairs oxidized periplasmic proteins containing methionine sulfoxide residues (Met-O), using respiratory chain electrons. Thus protects these proteins from oxidative-stress damage caused by reactive species of oxygen and chlorine generated by the host defense mechanisms. MsrPQ is essential for the maintenance of envelope integrity under bleach stress, rescuing a wide series of structurally unrelated periplasmic proteins from methionine oxidation. The catalytic subunit MsrP is non-stereospecific, being able to reduce both (R-) and (S-) diastereoisomers of methionine sulfoxide.</text>
</comment>
<comment type="catalytic activity">
    <reaction evidence="1">
        <text>L-methionyl-[protein] + a quinone + H2O = L-methionyl-(S)-S-oxide-[protein] + a quinol</text>
        <dbReference type="Rhea" id="RHEA:51292"/>
        <dbReference type="Rhea" id="RHEA-COMP:12313"/>
        <dbReference type="Rhea" id="RHEA-COMP:12315"/>
        <dbReference type="ChEBI" id="CHEBI:15377"/>
        <dbReference type="ChEBI" id="CHEBI:16044"/>
        <dbReference type="ChEBI" id="CHEBI:24646"/>
        <dbReference type="ChEBI" id="CHEBI:44120"/>
        <dbReference type="ChEBI" id="CHEBI:132124"/>
    </reaction>
</comment>
<comment type="catalytic activity">
    <reaction evidence="1">
        <text>L-methionyl-[protein] + a quinone + H2O = L-methionyl-(R)-S-oxide-[protein] + a quinol</text>
        <dbReference type="Rhea" id="RHEA:51296"/>
        <dbReference type="Rhea" id="RHEA-COMP:12313"/>
        <dbReference type="Rhea" id="RHEA-COMP:12314"/>
        <dbReference type="ChEBI" id="CHEBI:15377"/>
        <dbReference type="ChEBI" id="CHEBI:16044"/>
        <dbReference type="ChEBI" id="CHEBI:24646"/>
        <dbReference type="ChEBI" id="CHEBI:45764"/>
        <dbReference type="ChEBI" id="CHEBI:132124"/>
    </reaction>
</comment>
<comment type="cofactor">
    <cofactor evidence="1">
        <name>Mo-molybdopterin</name>
        <dbReference type="ChEBI" id="CHEBI:71302"/>
    </cofactor>
    <text evidence="1">Binds 1 Mo-molybdopterin (Mo-MPT) cofactor per subunit.</text>
</comment>
<comment type="subunit">
    <text evidence="1">Heterodimer of a catalytic subunit (MsrP) and a heme-binding subunit (MsrQ).</text>
</comment>
<comment type="subcellular location">
    <subcellularLocation>
        <location evidence="1">Periplasm</location>
    </subcellularLocation>
    <text evidence="1">Is attached to the inner membrane when interacting with the MsrQ subunit.</text>
</comment>
<comment type="PTM">
    <text evidence="1">Predicted to be exported by the Tat system. The position of the signal peptide cleavage has not been experimentally proven.</text>
</comment>
<comment type="similarity">
    <text evidence="1">Belongs to the MsrP family.</text>
</comment>
<sequence>MLITPEKLYKQRRNFLKLGAGALISSSVLASKLSALNFTSDTNPNKLEISDEELATNYVNFYEFSTDKRKAVSLAQNFNTQNWKIDISGEIEKPLTLSMEDILKFPLEERIYRFRCVETWSMVVPWVGFELRRLIEMAKPTSEAKFVKFTTLLDKSQFPDQDALFPTIDYPYVEGLRMDEAMHPLTLLAVGMYKKALKPQNGAPIRLVVPWKYGFKSIKSIVKIEFTKEQPKSTWESYAPSEYGFYANVNPNVSHPRWSQANERALGDFFTKPTLMFNGYEKEVASLYKNMDLKVNF</sequence>
<feature type="signal peptide" description="Tat-type signal" evidence="1">
    <location>
        <begin position="1"/>
        <end position="35"/>
    </location>
</feature>
<feature type="chain" id="PRO_0000070680" description="Protein-methionine-sulfoxide reductase catalytic subunit MsrP" evidence="1">
    <location>
        <begin position="36"/>
        <end position="297"/>
    </location>
</feature>
<feature type="binding site" evidence="1">
    <location>
        <begin position="62"/>
        <end position="63"/>
    </location>
    <ligand>
        <name>Mo-molybdopterin</name>
        <dbReference type="ChEBI" id="CHEBI:71302"/>
    </ligand>
</feature>
<feature type="binding site" evidence="1">
    <location>
        <position position="116"/>
    </location>
    <ligand>
        <name>Mo-molybdopterin</name>
        <dbReference type="ChEBI" id="CHEBI:71302"/>
    </ligand>
    <ligandPart>
        <name>Mo</name>
        <dbReference type="ChEBI" id="CHEBI:28685"/>
    </ligandPart>
</feature>
<feature type="binding site" evidence="1">
    <location>
        <position position="151"/>
    </location>
    <ligand>
        <name>Mo-molybdopterin</name>
        <dbReference type="ChEBI" id="CHEBI:71302"/>
    </ligand>
</feature>
<feature type="binding site" evidence="1">
    <location>
        <position position="201"/>
    </location>
    <ligand>
        <name>Mo-molybdopterin</name>
        <dbReference type="ChEBI" id="CHEBI:71302"/>
    </ligand>
</feature>
<feature type="binding site" evidence="1">
    <location>
        <position position="206"/>
    </location>
    <ligand>
        <name>Mo-molybdopterin</name>
        <dbReference type="ChEBI" id="CHEBI:71302"/>
    </ligand>
</feature>
<feature type="binding site" evidence="1">
    <location>
        <begin position="217"/>
        <end position="219"/>
    </location>
    <ligand>
        <name>Mo-molybdopterin</name>
        <dbReference type="ChEBI" id="CHEBI:71302"/>
    </ligand>
</feature>
<organism>
    <name type="scientific">Campylobacter jejuni subsp. jejuni serotype O:2 (strain ATCC 700819 / NCTC 11168)</name>
    <dbReference type="NCBI Taxonomy" id="192222"/>
    <lineage>
        <taxon>Bacteria</taxon>
        <taxon>Pseudomonadati</taxon>
        <taxon>Campylobacterota</taxon>
        <taxon>Epsilonproteobacteria</taxon>
        <taxon>Campylobacterales</taxon>
        <taxon>Campylobacteraceae</taxon>
        <taxon>Campylobacter</taxon>
    </lineage>
</organism>
<reference key="1">
    <citation type="journal article" date="2000" name="Nature">
        <title>The genome sequence of the food-borne pathogen Campylobacter jejuni reveals hypervariable sequences.</title>
        <authorList>
            <person name="Parkhill J."/>
            <person name="Wren B.W."/>
            <person name="Mungall K.L."/>
            <person name="Ketley J.M."/>
            <person name="Churcher C.M."/>
            <person name="Basham D."/>
            <person name="Chillingworth T."/>
            <person name="Davies R.M."/>
            <person name="Feltwell T."/>
            <person name="Holroyd S."/>
            <person name="Jagels K."/>
            <person name="Karlyshev A.V."/>
            <person name="Moule S."/>
            <person name="Pallen M.J."/>
            <person name="Penn C.W."/>
            <person name="Quail M.A."/>
            <person name="Rajandream M.A."/>
            <person name="Rutherford K.M."/>
            <person name="van Vliet A.H.M."/>
            <person name="Whitehead S."/>
            <person name="Barrell B.G."/>
        </authorList>
    </citation>
    <scope>NUCLEOTIDE SEQUENCE [LARGE SCALE GENOMIC DNA]</scope>
    <source>
        <strain>ATCC 700819 / NCTC 11168</strain>
    </source>
</reference>
<keyword id="KW-0479">Metal-binding</keyword>
<keyword id="KW-0500">Molybdenum</keyword>
<keyword id="KW-0560">Oxidoreductase</keyword>
<keyword id="KW-0574">Periplasm</keyword>
<keyword id="KW-1185">Reference proteome</keyword>
<keyword id="KW-0732">Signal</keyword>
<protein>
    <recommendedName>
        <fullName evidence="1">Protein-methionine-sulfoxide reductase catalytic subunit MsrP</fullName>
        <ecNumber evidence="1">1.8.5.-</ecNumber>
    </recommendedName>
</protein>
<dbReference type="EC" id="1.8.5.-" evidence="1"/>
<dbReference type="EMBL" id="AL111168">
    <property type="protein sequence ID" value="CAL34529.1"/>
    <property type="molecule type" value="Genomic_DNA"/>
</dbReference>
<dbReference type="PIR" id="A81381">
    <property type="entry name" value="A81381"/>
</dbReference>
<dbReference type="RefSeq" id="WP_002858649.1">
    <property type="nucleotide sequence ID" value="NZ_SZUC01000004.1"/>
</dbReference>
<dbReference type="RefSeq" id="YP_002343816.1">
    <property type="nucleotide sequence ID" value="NC_002163.1"/>
</dbReference>
<dbReference type="SMR" id="Q9PIC3"/>
<dbReference type="IntAct" id="Q9PIC3">
    <property type="interactions" value="2"/>
</dbReference>
<dbReference type="STRING" id="192222.Cj0379c"/>
<dbReference type="PaxDb" id="192222-Cj0379c"/>
<dbReference type="EnsemblBacteria" id="CAL34529">
    <property type="protein sequence ID" value="CAL34529"/>
    <property type="gene ID" value="Cj0379c"/>
</dbReference>
<dbReference type="GeneID" id="904702"/>
<dbReference type="KEGG" id="cje:Cj0379c"/>
<dbReference type="PATRIC" id="fig|192222.6.peg.370"/>
<dbReference type="eggNOG" id="COG2041">
    <property type="taxonomic scope" value="Bacteria"/>
</dbReference>
<dbReference type="HOGENOM" id="CLU_045520_0_0_7"/>
<dbReference type="OrthoDB" id="9795587at2"/>
<dbReference type="Proteomes" id="UP000000799">
    <property type="component" value="Chromosome"/>
</dbReference>
<dbReference type="GO" id="GO:0042597">
    <property type="term" value="C:periplasmic space"/>
    <property type="evidence" value="ECO:0007669"/>
    <property type="project" value="UniProtKB-SubCell"/>
</dbReference>
<dbReference type="GO" id="GO:0046872">
    <property type="term" value="F:metal ion binding"/>
    <property type="evidence" value="ECO:0007669"/>
    <property type="project" value="UniProtKB-KW"/>
</dbReference>
<dbReference type="GO" id="GO:0043546">
    <property type="term" value="F:molybdopterin cofactor binding"/>
    <property type="evidence" value="ECO:0007669"/>
    <property type="project" value="UniProtKB-UniRule"/>
</dbReference>
<dbReference type="GO" id="GO:0016672">
    <property type="term" value="F:oxidoreductase activity, acting on a sulfur group of donors, quinone or similar compound as acceptor"/>
    <property type="evidence" value="ECO:0007669"/>
    <property type="project" value="UniProtKB-UniRule"/>
</dbReference>
<dbReference type="GO" id="GO:0030091">
    <property type="term" value="P:protein repair"/>
    <property type="evidence" value="ECO:0007669"/>
    <property type="project" value="UniProtKB-UniRule"/>
</dbReference>
<dbReference type="CDD" id="cd02107">
    <property type="entry name" value="YedY_like_Moco"/>
    <property type="match status" value="1"/>
</dbReference>
<dbReference type="Gene3D" id="3.90.420.10">
    <property type="entry name" value="Oxidoreductase, molybdopterin-binding domain"/>
    <property type="match status" value="1"/>
</dbReference>
<dbReference type="HAMAP" id="MF_01206">
    <property type="entry name" value="MsrP"/>
    <property type="match status" value="1"/>
</dbReference>
<dbReference type="InterPro" id="IPR022867">
    <property type="entry name" value="MsrP"/>
</dbReference>
<dbReference type="InterPro" id="IPR000572">
    <property type="entry name" value="OxRdtase_Mopterin-bd_dom"/>
</dbReference>
<dbReference type="InterPro" id="IPR036374">
    <property type="entry name" value="OxRdtase_Mopterin-bd_sf"/>
</dbReference>
<dbReference type="NCBIfam" id="NF003767">
    <property type="entry name" value="PRK05363.1"/>
    <property type="match status" value="1"/>
</dbReference>
<dbReference type="PANTHER" id="PTHR43032">
    <property type="entry name" value="PROTEIN-METHIONINE-SULFOXIDE REDUCTASE"/>
    <property type="match status" value="1"/>
</dbReference>
<dbReference type="PANTHER" id="PTHR43032:SF3">
    <property type="entry name" value="PROTEIN-METHIONINE-SULFOXIDE REDUCTASE CATALYTIC SUBUNIT MSRP"/>
    <property type="match status" value="1"/>
</dbReference>
<dbReference type="Pfam" id="PF00174">
    <property type="entry name" value="Oxidored_molyb"/>
    <property type="match status" value="1"/>
</dbReference>
<dbReference type="SUPFAM" id="SSF56524">
    <property type="entry name" value="Oxidoreductase molybdopterin-binding domain"/>
    <property type="match status" value="1"/>
</dbReference>
<name>MSRP_CAMJE</name>